<reference key="1">
    <citation type="journal article" date="2004" name="Proc. Natl. Acad. Sci. U.S.A.">
        <title>Complete genomes of two clinical Staphylococcus aureus strains: evidence for the rapid evolution of virulence and drug resistance.</title>
        <authorList>
            <person name="Holden M.T.G."/>
            <person name="Feil E.J."/>
            <person name="Lindsay J.A."/>
            <person name="Peacock S.J."/>
            <person name="Day N.P.J."/>
            <person name="Enright M.C."/>
            <person name="Foster T.J."/>
            <person name="Moore C.E."/>
            <person name="Hurst L."/>
            <person name="Atkin R."/>
            <person name="Barron A."/>
            <person name="Bason N."/>
            <person name="Bentley S.D."/>
            <person name="Chillingworth C."/>
            <person name="Chillingworth T."/>
            <person name="Churcher C."/>
            <person name="Clark L."/>
            <person name="Corton C."/>
            <person name="Cronin A."/>
            <person name="Doggett J."/>
            <person name="Dowd L."/>
            <person name="Feltwell T."/>
            <person name="Hance Z."/>
            <person name="Harris B."/>
            <person name="Hauser H."/>
            <person name="Holroyd S."/>
            <person name="Jagels K."/>
            <person name="James K.D."/>
            <person name="Lennard N."/>
            <person name="Line A."/>
            <person name="Mayes R."/>
            <person name="Moule S."/>
            <person name="Mungall K."/>
            <person name="Ormond D."/>
            <person name="Quail M.A."/>
            <person name="Rabbinowitsch E."/>
            <person name="Rutherford K.M."/>
            <person name="Sanders M."/>
            <person name="Sharp S."/>
            <person name="Simmonds M."/>
            <person name="Stevens K."/>
            <person name="Whitehead S."/>
            <person name="Barrell B.G."/>
            <person name="Spratt B.G."/>
            <person name="Parkhill J."/>
        </authorList>
    </citation>
    <scope>NUCLEOTIDE SEQUENCE [LARGE SCALE GENOMIC DNA]</scope>
    <source>
        <strain>MSSA476</strain>
    </source>
</reference>
<dbReference type="EC" id="3.6.5.-" evidence="1"/>
<dbReference type="EMBL" id="BX571857">
    <property type="protein sequence ID" value="CAG43381.1"/>
    <property type="molecule type" value="Genomic_DNA"/>
</dbReference>
<dbReference type="SMR" id="Q6G8S5"/>
<dbReference type="KEGG" id="sas:SAS1580"/>
<dbReference type="HOGENOM" id="CLU_011747_2_1_9"/>
<dbReference type="GO" id="GO:0005737">
    <property type="term" value="C:cytoplasm"/>
    <property type="evidence" value="ECO:0007669"/>
    <property type="project" value="UniProtKB-SubCell"/>
</dbReference>
<dbReference type="GO" id="GO:0005525">
    <property type="term" value="F:GTP binding"/>
    <property type="evidence" value="ECO:0007669"/>
    <property type="project" value="UniProtKB-UniRule"/>
</dbReference>
<dbReference type="GO" id="GO:0003924">
    <property type="term" value="F:GTPase activity"/>
    <property type="evidence" value="ECO:0007669"/>
    <property type="project" value="UniProtKB-UniRule"/>
</dbReference>
<dbReference type="GO" id="GO:0000287">
    <property type="term" value="F:magnesium ion binding"/>
    <property type="evidence" value="ECO:0007669"/>
    <property type="project" value="InterPro"/>
</dbReference>
<dbReference type="GO" id="GO:0042254">
    <property type="term" value="P:ribosome biogenesis"/>
    <property type="evidence" value="ECO:0007669"/>
    <property type="project" value="UniProtKB-UniRule"/>
</dbReference>
<dbReference type="CDD" id="cd01898">
    <property type="entry name" value="Obg"/>
    <property type="match status" value="1"/>
</dbReference>
<dbReference type="FunFam" id="2.70.210.12:FF:000001">
    <property type="entry name" value="GTPase Obg"/>
    <property type="match status" value="1"/>
</dbReference>
<dbReference type="FunFam" id="3.40.50.300:FF:000515">
    <property type="entry name" value="GTPase Obg"/>
    <property type="match status" value="1"/>
</dbReference>
<dbReference type="Gene3D" id="3.30.300.350">
    <property type="entry name" value="GTP-binding protein OBG, C-terminal domain"/>
    <property type="match status" value="1"/>
</dbReference>
<dbReference type="Gene3D" id="2.70.210.12">
    <property type="entry name" value="GTP1/OBG domain"/>
    <property type="match status" value="1"/>
</dbReference>
<dbReference type="Gene3D" id="3.40.50.300">
    <property type="entry name" value="P-loop containing nucleotide triphosphate hydrolases"/>
    <property type="match status" value="1"/>
</dbReference>
<dbReference type="HAMAP" id="MF_01454">
    <property type="entry name" value="GTPase_Obg"/>
    <property type="match status" value="1"/>
</dbReference>
<dbReference type="InterPro" id="IPR031167">
    <property type="entry name" value="G_OBG"/>
</dbReference>
<dbReference type="InterPro" id="IPR006073">
    <property type="entry name" value="GTP-bd"/>
</dbReference>
<dbReference type="InterPro" id="IPR014100">
    <property type="entry name" value="GTP-bd_Obg/CgtA"/>
</dbReference>
<dbReference type="InterPro" id="IPR036346">
    <property type="entry name" value="GTP-bd_prot_GTP1/OBG_C_sf"/>
</dbReference>
<dbReference type="InterPro" id="IPR006074">
    <property type="entry name" value="GTP1-OBG_CS"/>
</dbReference>
<dbReference type="InterPro" id="IPR006169">
    <property type="entry name" value="GTP1_OBG_dom"/>
</dbReference>
<dbReference type="InterPro" id="IPR036726">
    <property type="entry name" value="GTP1_OBG_dom_sf"/>
</dbReference>
<dbReference type="InterPro" id="IPR045086">
    <property type="entry name" value="OBG_GTPase"/>
</dbReference>
<dbReference type="InterPro" id="IPR015349">
    <property type="entry name" value="OCT_dom"/>
</dbReference>
<dbReference type="InterPro" id="IPR027417">
    <property type="entry name" value="P-loop_NTPase"/>
</dbReference>
<dbReference type="NCBIfam" id="TIGR02729">
    <property type="entry name" value="Obg_CgtA"/>
    <property type="match status" value="1"/>
</dbReference>
<dbReference type="NCBIfam" id="TIGR03595">
    <property type="entry name" value="Obg_CgtA_exten"/>
    <property type="match status" value="1"/>
</dbReference>
<dbReference type="NCBIfam" id="NF008954">
    <property type="entry name" value="PRK12296.1"/>
    <property type="match status" value="1"/>
</dbReference>
<dbReference type="NCBIfam" id="NF008955">
    <property type="entry name" value="PRK12297.1"/>
    <property type="match status" value="1"/>
</dbReference>
<dbReference type="NCBIfam" id="NF008956">
    <property type="entry name" value="PRK12299.1"/>
    <property type="match status" value="1"/>
</dbReference>
<dbReference type="PANTHER" id="PTHR11702">
    <property type="entry name" value="DEVELOPMENTALLY REGULATED GTP-BINDING PROTEIN-RELATED"/>
    <property type="match status" value="1"/>
</dbReference>
<dbReference type="PANTHER" id="PTHR11702:SF31">
    <property type="entry name" value="MITOCHONDRIAL RIBOSOME-ASSOCIATED GTPASE 2"/>
    <property type="match status" value="1"/>
</dbReference>
<dbReference type="Pfam" id="PF09269">
    <property type="entry name" value="DUF1967"/>
    <property type="match status" value="1"/>
</dbReference>
<dbReference type="Pfam" id="PF01018">
    <property type="entry name" value="GTP1_OBG"/>
    <property type="match status" value="1"/>
</dbReference>
<dbReference type="Pfam" id="PF01926">
    <property type="entry name" value="MMR_HSR1"/>
    <property type="match status" value="1"/>
</dbReference>
<dbReference type="PIRSF" id="PIRSF002401">
    <property type="entry name" value="GTP_bd_Obg/CgtA"/>
    <property type="match status" value="1"/>
</dbReference>
<dbReference type="PRINTS" id="PR00326">
    <property type="entry name" value="GTP1OBG"/>
</dbReference>
<dbReference type="SUPFAM" id="SSF102741">
    <property type="entry name" value="Obg GTP-binding protein C-terminal domain"/>
    <property type="match status" value="1"/>
</dbReference>
<dbReference type="SUPFAM" id="SSF82051">
    <property type="entry name" value="Obg GTP-binding protein N-terminal domain"/>
    <property type="match status" value="1"/>
</dbReference>
<dbReference type="SUPFAM" id="SSF52540">
    <property type="entry name" value="P-loop containing nucleoside triphosphate hydrolases"/>
    <property type="match status" value="1"/>
</dbReference>
<dbReference type="PROSITE" id="PS51710">
    <property type="entry name" value="G_OBG"/>
    <property type="match status" value="1"/>
</dbReference>
<dbReference type="PROSITE" id="PS00905">
    <property type="entry name" value="GTP1_OBG"/>
    <property type="match status" value="1"/>
</dbReference>
<dbReference type="PROSITE" id="PS51883">
    <property type="entry name" value="OBG"/>
    <property type="match status" value="1"/>
</dbReference>
<dbReference type="PROSITE" id="PS51881">
    <property type="entry name" value="OCT"/>
    <property type="match status" value="1"/>
</dbReference>
<organism>
    <name type="scientific">Staphylococcus aureus (strain MSSA476)</name>
    <dbReference type="NCBI Taxonomy" id="282459"/>
    <lineage>
        <taxon>Bacteria</taxon>
        <taxon>Bacillati</taxon>
        <taxon>Bacillota</taxon>
        <taxon>Bacilli</taxon>
        <taxon>Bacillales</taxon>
        <taxon>Staphylococcaceae</taxon>
        <taxon>Staphylococcus</taxon>
    </lineage>
</organism>
<protein>
    <recommendedName>
        <fullName evidence="1">GTPase Obg</fullName>
        <ecNumber evidence="1">3.6.5.-</ecNumber>
    </recommendedName>
    <alternativeName>
        <fullName evidence="1">GTP-binding protein Obg</fullName>
    </alternativeName>
</protein>
<sequence length="430" mass="47235">MFVDQVKISLKAGDGGNGITAYRREKYVPFGGPAGGDGGKGASVVFEVDEGLRTLLDFRYQRHFKASKGENGQSSNMHGKNAEDLVLKVPPGTIIKNVETDEVLADLVEDGQRAVVAKGGRGGRGNSRFATPRNPAPDFSEKGEPGEELDVSLELKLLADVGLVGFPSVGKSTLLSIVSKAKPKIGAYHFTTIKPNLGVVSTPDQRSFVMADLPGLIEGASDGVGLGHQFLRHVERTKVIVHMIDMSGSEGREPIEDYKVINQELAAYEQRLEDRPQIVVANKMDLPESQDNLNLFKEEIGEDVPVIPVSTITRDNIDQLLYAIADKLEEYKDVDFTVEEEESVGINRVLYKHTPSQDKFTISRDDDGAYVVSGNAIERMFKMTDFNSDPAVRRFARQMRSMGIDDALRERGCKNGDIVRILGGEFEFVE</sequence>
<comment type="function">
    <text evidence="1">An essential GTPase which binds GTP, GDP and possibly (p)ppGpp with moderate affinity, with high nucleotide exchange rates and a fairly low GTP hydrolysis rate. Plays a role in control of the cell cycle, stress response, ribosome biogenesis and in those bacteria that undergo differentiation, in morphogenesis control.</text>
</comment>
<comment type="cofactor">
    <cofactor evidence="1">
        <name>Mg(2+)</name>
        <dbReference type="ChEBI" id="CHEBI:18420"/>
    </cofactor>
</comment>
<comment type="subunit">
    <text evidence="1">Monomer.</text>
</comment>
<comment type="subcellular location">
    <subcellularLocation>
        <location evidence="1">Cytoplasm</location>
    </subcellularLocation>
</comment>
<comment type="similarity">
    <text evidence="1">Belongs to the TRAFAC class OBG-HflX-like GTPase superfamily. OBG GTPase family.</text>
</comment>
<keyword id="KW-0963">Cytoplasm</keyword>
<keyword id="KW-0342">GTP-binding</keyword>
<keyword id="KW-0378">Hydrolase</keyword>
<keyword id="KW-0460">Magnesium</keyword>
<keyword id="KW-0479">Metal-binding</keyword>
<keyword id="KW-0547">Nucleotide-binding</keyword>
<name>OBG_STAAS</name>
<accession>Q6G8S5</accession>
<proteinExistence type="inferred from homology"/>
<evidence type="ECO:0000255" key="1">
    <source>
        <dbReference type="HAMAP-Rule" id="MF_01454"/>
    </source>
</evidence>
<evidence type="ECO:0000255" key="2">
    <source>
        <dbReference type="PROSITE-ProRule" id="PRU01229"/>
    </source>
</evidence>
<evidence type="ECO:0000255" key="3">
    <source>
        <dbReference type="PROSITE-ProRule" id="PRU01231"/>
    </source>
</evidence>
<evidence type="ECO:0000256" key="4">
    <source>
        <dbReference type="SAM" id="MobiDB-lite"/>
    </source>
</evidence>
<gene>
    <name evidence="1" type="primary">obg</name>
    <name type="ordered locus">SAS1580</name>
</gene>
<feature type="chain" id="PRO_0000386273" description="GTPase Obg">
    <location>
        <begin position="1"/>
        <end position="430"/>
    </location>
</feature>
<feature type="domain" description="Obg" evidence="3">
    <location>
        <begin position="1"/>
        <end position="158"/>
    </location>
</feature>
<feature type="domain" description="OBG-type G" evidence="1">
    <location>
        <begin position="159"/>
        <end position="329"/>
    </location>
</feature>
<feature type="domain" description="OCT" evidence="2">
    <location>
        <begin position="352"/>
        <end position="430"/>
    </location>
</feature>
<feature type="region of interest" description="Disordered" evidence="4">
    <location>
        <begin position="118"/>
        <end position="145"/>
    </location>
</feature>
<feature type="binding site" evidence="1">
    <location>
        <begin position="165"/>
        <end position="172"/>
    </location>
    <ligand>
        <name>GTP</name>
        <dbReference type="ChEBI" id="CHEBI:37565"/>
    </ligand>
</feature>
<feature type="binding site" evidence="1">
    <location>
        <position position="172"/>
    </location>
    <ligand>
        <name>Mg(2+)</name>
        <dbReference type="ChEBI" id="CHEBI:18420"/>
    </ligand>
</feature>
<feature type="binding site" evidence="1">
    <location>
        <begin position="190"/>
        <end position="194"/>
    </location>
    <ligand>
        <name>GTP</name>
        <dbReference type="ChEBI" id="CHEBI:37565"/>
    </ligand>
</feature>
<feature type="binding site" evidence="1">
    <location>
        <position position="192"/>
    </location>
    <ligand>
        <name>Mg(2+)</name>
        <dbReference type="ChEBI" id="CHEBI:18420"/>
    </ligand>
</feature>
<feature type="binding site" evidence="1">
    <location>
        <begin position="212"/>
        <end position="215"/>
    </location>
    <ligand>
        <name>GTP</name>
        <dbReference type="ChEBI" id="CHEBI:37565"/>
    </ligand>
</feature>
<feature type="binding site" evidence="1">
    <location>
        <begin position="282"/>
        <end position="285"/>
    </location>
    <ligand>
        <name>GTP</name>
        <dbReference type="ChEBI" id="CHEBI:37565"/>
    </ligand>
</feature>
<feature type="binding site" evidence="1">
    <location>
        <begin position="310"/>
        <end position="312"/>
    </location>
    <ligand>
        <name>GTP</name>
        <dbReference type="ChEBI" id="CHEBI:37565"/>
    </ligand>
</feature>